<gene>
    <name evidence="1" type="primary">galK</name>
    <name type="ordered locus">SPA1978</name>
</gene>
<reference key="1">
    <citation type="journal article" date="2004" name="Nat. Genet.">
        <title>Comparison of genome degradation in Paratyphi A and Typhi, human-restricted serovars of Salmonella enterica that cause typhoid.</title>
        <authorList>
            <person name="McClelland M."/>
            <person name="Sanderson K.E."/>
            <person name="Clifton S.W."/>
            <person name="Latreille P."/>
            <person name="Porwollik S."/>
            <person name="Sabo A."/>
            <person name="Meyer R."/>
            <person name="Bieri T."/>
            <person name="Ozersky P."/>
            <person name="McLellan M."/>
            <person name="Harkins C.R."/>
            <person name="Wang C."/>
            <person name="Nguyen C."/>
            <person name="Berghoff A."/>
            <person name="Elliott G."/>
            <person name="Kohlberg S."/>
            <person name="Strong C."/>
            <person name="Du F."/>
            <person name="Carter J."/>
            <person name="Kremizki C."/>
            <person name="Layman D."/>
            <person name="Leonard S."/>
            <person name="Sun H."/>
            <person name="Fulton L."/>
            <person name="Nash W."/>
            <person name="Miner T."/>
            <person name="Minx P."/>
            <person name="Delehaunty K."/>
            <person name="Fronick C."/>
            <person name="Magrini V."/>
            <person name="Nhan M."/>
            <person name="Warren W."/>
            <person name="Florea L."/>
            <person name="Spieth J."/>
            <person name="Wilson R.K."/>
        </authorList>
    </citation>
    <scope>NUCLEOTIDE SEQUENCE [LARGE SCALE GENOMIC DNA]</scope>
    <source>
        <strain>ATCC 9150 / SARB42</strain>
    </source>
</reference>
<organism>
    <name type="scientific">Salmonella paratyphi A (strain ATCC 9150 / SARB42)</name>
    <dbReference type="NCBI Taxonomy" id="295319"/>
    <lineage>
        <taxon>Bacteria</taxon>
        <taxon>Pseudomonadati</taxon>
        <taxon>Pseudomonadota</taxon>
        <taxon>Gammaproteobacteria</taxon>
        <taxon>Enterobacterales</taxon>
        <taxon>Enterobacteriaceae</taxon>
        <taxon>Salmonella</taxon>
    </lineage>
</organism>
<accession>Q5PG77</accession>
<dbReference type="EC" id="2.7.1.6" evidence="1"/>
<dbReference type="EMBL" id="CP000026">
    <property type="protein sequence ID" value="AAV77886.1"/>
    <property type="molecule type" value="Genomic_DNA"/>
</dbReference>
<dbReference type="RefSeq" id="WP_001049355.1">
    <property type="nucleotide sequence ID" value="NC_006511.1"/>
</dbReference>
<dbReference type="SMR" id="Q5PG77"/>
<dbReference type="KEGG" id="spt:SPA1978"/>
<dbReference type="HOGENOM" id="CLU_017814_2_1_6"/>
<dbReference type="UniPathway" id="UPA00214"/>
<dbReference type="Proteomes" id="UP000008185">
    <property type="component" value="Chromosome"/>
</dbReference>
<dbReference type="GO" id="GO:0005829">
    <property type="term" value="C:cytosol"/>
    <property type="evidence" value="ECO:0007669"/>
    <property type="project" value="TreeGrafter"/>
</dbReference>
<dbReference type="GO" id="GO:0005524">
    <property type="term" value="F:ATP binding"/>
    <property type="evidence" value="ECO:0007669"/>
    <property type="project" value="UniProtKB-UniRule"/>
</dbReference>
<dbReference type="GO" id="GO:0004335">
    <property type="term" value="F:galactokinase activity"/>
    <property type="evidence" value="ECO:0007669"/>
    <property type="project" value="UniProtKB-UniRule"/>
</dbReference>
<dbReference type="GO" id="GO:0000287">
    <property type="term" value="F:magnesium ion binding"/>
    <property type="evidence" value="ECO:0007669"/>
    <property type="project" value="UniProtKB-UniRule"/>
</dbReference>
<dbReference type="GO" id="GO:0006012">
    <property type="term" value="P:galactose metabolic process"/>
    <property type="evidence" value="ECO:0007669"/>
    <property type="project" value="UniProtKB-UniRule"/>
</dbReference>
<dbReference type="FunFam" id="3.30.230.10:FF:000017">
    <property type="entry name" value="Galactokinase"/>
    <property type="match status" value="1"/>
</dbReference>
<dbReference type="FunFam" id="3.30.70.890:FF:000001">
    <property type="entry name" value="Galactokinase"/>
    <property type="match status" value="1"/>
</dbReference>
<dbReference type="Gene3D" id="3.30.230.10">
    <property type="match status" value="1"/>
</dbReference>
<dbReference type="Gene3D" id="3.30.70.890">
    <property type="entry name" value="GHMP kinase, C-terminal domain"/>
    <property type="match status" value="1"/>
</dbReference>
<dbReference type="HAMAP" id="MF_00246">
    <property type="entry name" value="Galactokinase"/>
    <property type="match status" value="1"/>
</dbReference>
<dbReference type="InterPro" id="IPR000705">
    <property type="entry name" value="Galactokinase"/>
</dbReference>
<dbReference type="InterPro" id="IPR022963">
    <property type="entry name" value="Galactokinase_bac"/>
</dbReference>
<dbReference type="InterPro" id="IPR019741">
    <property type="entry name" value="Galactokinase_CS"/>
</dbReference>
<dbReference type="InterPro" id="IPR019539">
    <property type="entry name" value="GalKase_N"/>
</dbReference>
<dbReference type="InterPro" id="IPR013750">
    <property type="entry name" value="GHMP_kinase_C_dom"/>
</dbReference>
<dbReference type="InterPro" id="IPR036554">
    <property type="entry name" value="GHMP_kinase_C_sf"/>
</dbReference>
<dbReference type="InterPro" id="IPR006204">
    <property type="entry name" value="GHMP_kinase_N_dom"/>
</dbReference>
<dbReference type="InterPro" id="IPR006203">
    <property type="entry name" value="GHMP_knse_ATP-bd_CS"/>
</dbReference>
<dbReference type="InterPro" id="IPR006206">
    <property type="entry name" value="Mevalonate/galactokinase"/>
</dbReference>
<dbReference type="InterPro" id="IPR020568">
    <property type="entry name" value="Ribosomal_Su5_D2-typ_SF"/>
</dbReference>
<dbReference type="InterPro" id="IPR014721">
    <property type="entry name" value="Ribsml_uS5_D2-typ_fold_subgr"/>
</dbReference>
<dbReference type="NCBIfam" id="TIGR00131">
    <property type="entry name" value="gal_kin"/>
    <property type="match status" value="1"/>
</dbReference>
<dbReference type="NCBIfam" id="NF003472">
    <property type="entry name" value="PRK05101.1"/>
    <property type="match status" value="1"/>
</dbReference>
<dbReference type="PANTHER" id="PTHR10457:SF7">
    <property type="entry name" value="GALACTOKINASE-RELATED"/>
    <property type="match status" value="1"/>
</dbReference>
<dbReference type="PANTHER" id="PTHR10457">
    <property type="entry name" value="MEVALONATE KINASE/GALACTOKINASE"/>
    <property type="match status" value="1"/>
</dbReference>
<dbReference type="Pfam" id="PF10509">
    <property type="entry name" value="GalKase_gal_bdg"/>
    <property type="match status" value="1"/>
</dbReference>
<dbReference type="Pfam" id="PF08544">
    <property type="entry name" value="GHMP_kinases_C"/>
    <property type="match status" value="1"/>
</dbReference>
<dbReference type="Pfam" id="PF00288">
    <property type="entry name" value="GHMP_kinases_N"/>
    <property type="match status" value="1"/>
</dbReference>
<dbReference type="PIRSF" id="PIRSF000530">
    <property type="entry name" value="Galactokinase"/>
    <property type="match status" value="1"/>
</dbReference>
<dbReference type="PRINTS" id="PR00473">
    <property type="entry name" value="GALCTOKINASE"/>
</dbReference>
<dbReference type="PRINTS" id="PR00959">
    <property type="entry name" value="MEVGALKINASE"/>
</dbReference>
<dbReference type="SUPFAM" id="SSF55060">
    <property type="entry name" value="GHMP Kinase, C-terminal domain"/>
    <property type="match status" value="1"/>
</dbReference>
<dbReference type="SUPFAM" id="SSF54211">
    <property type="entry name" value="Ribosomal protein S5 domain 2-like"/>
    <property type="match status" value="1"/>
</dbReference>
<dbReference type="PROSITE" id="PS00106">
    <property type="entry name" value="GALACTOKINASE"/>
    <property type="match status" value="1"/>
</dbReference>
<dbReference type="PROSITE" id="PS00627">
    <property type="entry name" value="GHMP_KINASES_ATP"/>
    <property type="match status" value="1"/>
</dbReference>
<sequence>MNLKEKTRALFAEIFGYPATHTIQAPGRVNLIGEHTDYNDGFVLPCAIDYQTVISCAPRDDRTVRVIAADYDNQADEFSLDAPIVTHDSQQWSNYVRGVVKHLQQRNNAFGGVDMVISGNVPQGAGLSSSASLEVAVGTVFQQLYHLPLDGAQIALNGQEAENQFVGCNCGIMDQLISALGKKDHALLIDCRTLGAKAVSMPKGVAVVIINSNFKRTLVGSEYNTRREQCETGARFFQQPALRDVSLEAFNAVASELDPVVAKRVRHVLSENARTVEAASALEKGDLQRMGQLMAESHASMRDDFEITVPQIDTLVDIVKATIGDQGGVRMTGGGFGGCVVALIPEDLVPAVQQAVAQQYEAKTGIKETFYVCKSSQGAGQC</sequence>
<feature type="chain" id="PRO_1000005760" description="Galactokinase">
    <location>
        <begin position="1"/>
        <end position="382"/>
    </location>
</feature>
<feature type="active site" description="Proton acceptor" evidence="1">
    <location>
        <position position="174"/>
    </location>
</feature>
<feature type="binding site" evidence="1">
    <location>
        <begin position="34"/>
        <end position="37"/>
    </location>
    <ligand>
        <name>substrate</name>
    </ligand>
</feature>
<feature type="binding site" evidence="1">
    <location>
        <begin position="124"/>
        <end position="130"/>
    </location>
    <ligand>
        <name>ATP</name>
        <dbReference type="ChEBI" id="CHEBI:30616"/>
    </ligand>
</feature>
<feature type="binding site" evidence="1">
    <location>
        <position position="130"/>
    </location>
    <ligand>
        <name>Mg(2+)</name>
        <dbReference type="ChEBI" id="CHEBI:18420"/>
    </ligand>
</feature>
<feature type="binding site" evidence="1">
    <location>
        <position position="162"/>
    </location>
    <ligand>
        <name>Mg(2+)</name>
        <dbReference type="ChEBI" id="CHEBI:18420"/>
    </ligand>
</feature>
<feature type="binding site" evidence="1">
    <location>
        <position position="223"/>
    </location>
    <ligand>
        <name>substrate</name>
    </ligand>
</feature>
<feature type="site" description="Transition state stabilizer" evidence="1">
    <location>
        <position position="28"/>
    </location>
</feature>
<name>GAL1_SALPA</name>
<protein>
    <recommendedName>
        <fullName evidence="1">Galactokinase</fullName>
        <ecNumber evidence="1">2.7.1.6</ecNumber>
    </recommendedName>
    <alternativeName>
        <fullName evidence="1">Galactose kinase</fullName>
    </alternativeName>
</protein>
<evidence type="ECO:0000255" key="1">
    <source>
        <dbReference type="HAMAP-Rule" id="MF_00246"/>
    </source>
</evidence>
<keyword id="KW-0067">ATP-binding</keyword>
<keyword id="KW-0119">Carbohydrate metabolism</keyword>
<keyword id="KW-0963">Cytoplasm</keyword>
<keyword id="KW-0299">Galactose metabolism</keyword>
<keyword id="KW-0418">Kinase</keyword>
<keyword id="KW-0460">Magnesium</keyword>
<keyword id="KW-0479">Metal-binding</keyword>
<keyword id="KW-0547">Nucleotide-binding</keyword>
<keyword id="KW-0808">Transferase</keyword>
<comment type="function">
    <text evidence="1">Catalyzes the transfer of the gamma-phosphate of ATP to D-galactose to form alpha-D-galactose-1-phosphate (Gal-1-P).</text>
</comment>
<comment type="catalytic activity">
    <reaction evidence="1">
        <text>alpha-D-galactose + ATP = alpha-D-galactose 1-phosphate + ADP + H(+)</text>
        <dbReference type="Rhea" id="RHEA:13553"/>
        <dbReference type="ChEBI" id="CHEBI:15378"/>
        <dbReference type="ChEBI" id="CHEBI:28061"/>
        <dbReference type="ChEBI" id="CHEBI:30616"/>
        <dbReference type="ChEBI" id="CHEBI:58336"/>
        <dbReference type="ChEBI" id="CHEBI:456216"/>
        <dbReference type="EC" id="2.7.1.6"/>
    </reaction>
</comment>
<comment type="pathway">
    <text evidence="1">Carbohydrate metabolism; galactose metabolism.</text>
</comment>
<comment type="subcellular location">
    <subcellularLocation>
        <location evidence="1">Cytoplasm</location>
    </subcellularLocation>
</comment>
<comment type="similarity">
    <text evidence="1">Belongs to the GHMP kinase family. GalK subfamily.</text>
</comment>
<proteinExistence type="inferred from homology"/>